<gene>
    <name type="primary">sipA</name>
    <name type="synonym">sspA</name>
</gene>
<evidence type="ECO:0000250" key="1"/>
<evidence type="ECO:0000256" key="2">
    <source>
        <dbReference type="SAM" id="MobiDB-lite"/>
    </source>
</evidence>
<evidence type="ECO:0000305" key="3"/>
<feature type="chain" id="PRO_0000221449" description="Cell invasion protein SipA">
    <location>
        <begin position="1"/>
        <end position="685"/>
    </location>
</feature>
<feature type="region of interest" description="Disordered" evidence="2">
    <location>
        <begin position="265"/>
        <end position="386"/>
    </location>
</feature>
<feature type="region of interest" description="Disordered" evidence="2">
    <location>
        <begin position="404"/>
        <end position="432"/>
    </location>
</feature>
<feature type="region of interest" description="Disordered" evidence="2">
    <location>
        <begin position="494"/>
        <end position="514"/>
    </location>
</feature>
<feature type="region of interest" description="Actin-binding and polymerization">
    <location>
        <begin position="497"/>
        <end position="669"/>
    </location>
</feature>
<feature type="compositionally biased region" description="Low complexity" evidence="2">
    <location>
        <begin position="291"/>
        <end position="304"/>
    </location>
</feature>
<feature type="compositionally biased region" description="Basic and acidic residues" evidence="2">
    <location>
        <begin position="315"/>
        <end position="337"/>
    </location>
</feature>
<feature type="compositionally biased region" description="Polar residues" evidence="2">
    <location>
        <begin position="338"/>
        <end position="349"/>
    </location>
</feature>
<feature type="compositionally biased region" description="Polar residues" evidence="2">
    <location>
        <begin position="369"/>
        <end position="383"/>
    </location>
</feature>
<feature type="compositionally biased region" description="Low complexity" evidence="2">
    <location>
        <begin position="417"/>
        <end position="429"/>
    </location>
</feature>
<feature type="compositionally biased region" description="Polar residues" evidence="2">
    <location>
        <begin position="494"/>
        <end position="511"/>
    </location>
</feature>
<sequence length="685" mass="73972">MVTSVRTQPPVIMPGMQTEIKTQATNLAANLSAVRESATTTLSGEIKGPQLEDFPALIKQASLDALFKCGKDAEALKEVFTNSNNVAGKKAIMEFAGLFRSALNATSDSPEAKTLLMKVGAEYTAQIIKDGLKEKSAFGPWLPETKKAEAKLENLEKQLLDIIKNNTGGELSKLSTNLVMQEVMPYIASCIEHNFGCTLDPLTRSNLTHLVDKAAAKAVEALDMCHQKLTQEQGTSVGREARHLEMQTLIPLLLRNVFAQIPADKLPDPKIPEPAAGPVPDGGKKAEPTGINININIDSSNHSVDNSKHINNSRSHVDNSQRHIDNSNHDNSRKTIDNSRTFIDNSQRNGESHHSTNSSNVSHSHSRVDSTTHQTETAHSASTGAIDHGIAGKIDVTAHATAEAVTNASSESKDGKVVTSEKGTTGETTSFDEVDGVTSKSIIGKPVQATVHGVDDNKQQSQTAEIVNVKPLASQLAGVENVKTDTLQSDTTVITGNKAGTTDNDNSQTDKTGPFSGLKFKQNSFLSTVPSVTNMHSMHFDARETFLGVIRKALEPDTSTPFPVRRAFDGLRAEILPNDTIKSAALKAQCSDIDKHPELKAKMETLKEVITHHPQKEKLAEIALQFAREAGLTRLKGETDYVLSNVLDGLIGDGSWRAGPAYESYLNKPGVDRVITTVDGLHMQR</sequence>
<protein>
    <recommendedName>
        <fullName>Cell invasion protein SipA</fullName>
    </recommendedName>
    <alternativeName>
        <fullName>Effector protein SipA</fullName>
    </alternativeName>
</protein>
<name>SIPA_SALEN</name>
<reference key="1">
    <citation type="submission" date="2001-12" db="EMBL/GenBank/DDBJ databases">
        <authorList>
            <person name="Senocq D."/>
            <person name="Doz E."/>
            <person name="Virlogeux-Payant I."/>
        </authorList>
    </citation>
    <scope>NUCLEOTIDE SEQUENCE [GENOMIC DNA]</scope>
    <source>
        <strain>1009</strain>
    </source>
</reference>
<comment type="function">
    <text evidence="1">Actin-binding protein that interferes with host cell actin cytoskeleton. It stimulates actin polymerization and counteracts F-actin destabilizing proteins. Potentiates SipC activity; both are required for an efficient bacterial internalization (By similarity).</text>
</comment>
<comment type="subcellular location">
    <subcellularLocation>
        <location evidence="1">Secreted</location>
    </subcellularLocation>
    <text evidence="1">Secreted via the type III secretion system 1 (SPI-1 T3SS).</text>
</comment>
<comment type="similarity">
    <text evidence="3">Belongs to the SipA/IpaA family.</text>
</comment>
<organism>
    <name type="scientific">Salmonella enteritidis</name>
    <dbReference type="NCBI Taxonomy" id="149539"/>
    <lineage>
        <taxon>Bacteria</taxon>
        <taxon>Pseudomonadati</taxon>
        <taxon>Pseudomonadota</taxon>
        <taxon>Gammaproteobacteria</taxon>
        <taxon>Enterobacterales</taxon>
        <taxon>Enterobacteriaceae</taxon>
        <taxon>Salmonella</taxon>
    </lineage>
</organism>
<proteinExistence type="evidence at protein level"/>
<keyword id="KW-0002">3D-structure</keyword>
<keyword id="KW-0009">Actin-binding</keyword>
<keyword id="KW-0964">Secreted</keyword>
<keyword id="KW-0843">Virulence</keyword>
<dbReference type="EMBL" id="AF458099">
    <property type="protein sequence ID" value="AAL58882.1"/>
    <property type="molecule type" value="Genomic_DNA"/>
</dbReference>
<dbReference type="RefSeq" id="WP_000258819.1">
    <property type="nucleotide sequence ID" value="NZ_WIDA01000001.1"/>
</dbReference>
<dbReference type="PDB" id="8C4C">
    <property type="method" value="EM"/>
    <property type="resolution" value="2.70 A"/>
    <property type="chains" value="K/L/M/N=497-669"/>
</dbReference>
<dbReference type="PDB" id="8C4E">
    <property type="method" value="EM"/>
    <property type="resolution" value="2.60 A"/>
    <property type="chains" value="K/L/M/N=425-685"/>
</dbReference>
<dbReference type="PDBsum" id="8C4C"/>
<dbReference type="PDBsum" id="8C4E"/>
<dbReference type="EMDB" id="EMD-16424"/>
<dbReference type="EMDB" id="EMD-16425"/>
<dbReference type="SMR" id="Q8VQB5"/>
<dbReference type="PATRIC" id="fig|149539.316.peg.2926"/>
<dbReference type="OMA" id="DALDMCH"/>
<dbReference type="GO" id="GO:0005576">
    <property type="term" value="C:extracellular region"/>
    <property type="evidence" value="ECO:0007669"/>
    <property type="project" value="UniProtKB-SubCell"/>
</dbReference>
<dbReference type="GO" id="GO:0003779">
    <property type="term" value="F:actin binding"/>
    <property type="evidence" value="ECO:0007669"/>
    <property type="project" value="UniProtKB-KW"/>
</dbReference>
<dbReference type="Gene3D" id="1.10.4110.10">
    <property type="entry name" value="Salmonella invasion protein A, C-terminal actin-binding domain"/>
    <property type="match status" value="1"/>
</dbReference>
<dbReference type="Gene3D" id="1.10.4150.10">
    <property type="entry name" value="SipA N-terminal domain-like"/>
    <property type="match status" value="1"/>
</dbReference>
<dbReference type="InterPro" id="IPR023224">
    <property type="entry name" value="SipA_actin-bd_C_sf"/>
</dbReference>
<dbReference type="InterPro" id="IPR054043">
    <property type="entry name" value="SipA_C"/>
</dbReference>
<dbReference type="InterPro" id="IPR023225">
    <property type="entry name" value="SipA_chaperone-bd"/>
</dbReference>
<dbReference type="InterPro" id="IPR015138">
    <property type="entry name" value="SipA_N"/>
</dbReference>
<dbReference type="NCBIfam" id="NF011903">
    <property type="entry name" value="PRK15376.1"/>
    <property type="match status" value="1"/>
</dbReference>
<dbReference type="Pfam" id="PF09052">
    <property type="entry name" value="SipA"/>
    <property type="match status" value="1"/>
</dbReference>
<dbReference type="Pfam" id="PF22163">
    <property type="entry name" value="SipA_2nd"/>
    <property type="match status" value="1"/>
</dbReference>
<dbReference type="SUPFAM" id="SSF101312">
    <property type="entry name" value="Invasion protein A (SipA) , C-terminal actin binding domain"/>
    <property type="match status" value="1"/>
</dbReference>
<dbReference type="SUPFAM" id="SSF140746">
    <property type="entry name" value="SipA N-terminal domain-like"/>
    <property type="match status" value="1"/>
</dbReference>
<accession>Q8VQB5</accession>